<organism>
    <name type="scientific">Anaeromyxobacter sp. (strain Fw109-5)</name>
    <dbReference type="NCBI Taxonomy" id="404589"/>
    <lineage>
        <taxon>Bacteria</taxon>
        <taxon>Pseudomonadati</taxon>
        <taxon>Myxococcota</taxon>
        <taxon>Myxococcia</taxon>
        <taxon>Myxococcales</taxon>
        <taxon>Cystobacterineae</taxon>
        <taxon>Anaeromyxobacteraceae</taxon>
        <taxon>Anaeromyxobacter</taxon>
    </lineage>
</organism>
<sequence length="122" mass="13433">MIQQQTMLDVADNSGAKKVQCIKVLGGSRRRYASIGDVIVVSVKEAIPQAKVKKGEVARAVIVRTSREVKRPDGSYIRFDGNSAVLINKDLEPIGTRIFGPVARELRARKFMKIISLAPEVL</sequence>
<protein>
    <recommendedName>
        <fullName evidence="1">Large ribosomal subunit protein uL14</fullName>
    </recommendedName>
    <alternativeName>
        <fullName evidence="2">50S ribosomal protein L14</fullName>
    </alternativeName>
</protein>
<feature type="chain" id="PRO_1000055502" description="Large ribosomal subunit protein uL14">
    <location>
        <begin position="1"/>
        <end position="122"/>
    </location>
</feature>
<reference key="1">
    <citation type="journal article" date="2015" name="Genome Announc.">
        <title>Complete genome sequence of Anaeromyxobacter sp. Fw109-5, an anaerobic, metal-reducing bacterium isolated from a contaminated subsurface environment.</title>
        <authorList>
            <person name="Hwang C."/>
            <person name="Copeland A."/>
            <person name="Lucas S."/>
            <person name="Lapidus A."/>
            <person name="Barry K."/>
            <person name="Glavina Del Rio T."/>
            <person name="Dalin E."/>
            <person name="Tice H."/>
            <person name="Pitluck S."/>
            <person name="Sims D."/>
            <person name="Brettin T."/>
            <person name="Bruce D.C."/>
            <person name="Detter J.C."/>
            <person name="Han C.S."/>
            <person name="Schmutz J."/>
            <person name="Larimer F.W."/>
            <person name="Land M.L."/>
            <person name="Hauser L.J."/>
            <person name="Kyrpides N."/>
            <person name="Lykidis A."/>
            <person name="Richardson P."/>
            <person name="Belieav A."/>
            <person name="Sanford R.A."/>
            <person name="Loeffler F.E."/>
            <person name="Fields M.W."/>
        </authorList>
    </citation>
    <scope>NUCLEOTIDE SEQUENCE [LARGE SCALE GENOMIC DNA]</scope>
    <source>
        <strain>Fw109-5</strain>
    </source>
</reference>
<keyword id="KW-1185">Reference proteome</keyword>
<keyword id="KW-0687">Ribonucleoprotein</keyword>
<keyword id="KW-0689">Ribosomal protein</keyword>
<keyword id="KW-0694">RNA-binding</keyword>
<keyword id="KW-0699">rRNA-binding</keyword>
<evidence type="ECO:0000255" key="1">
    <source>
        <dbReference type="HAMAP-Rule" id="MF_01367"/>
    </source>
</evidence>
<evidence type="ECO:0000305" key="2"/>
<dbReference type="EMBL" id="CP000769">
    <property type="protein sequence ID" value="ABS26124.1"/>
    <property type="molecule type" value="Genomic_DNA"/>
</dbReference>
<dbReference type="RefSeq" id="WP_012096703.1">
    <property type="nucleotide sequence ID" value="NC_009675.1"/>
</dbReference>
<dbReference type="SMR" id="A7HBM8"/>
<dbReference type="STRING" id="404589.Anae109_1921"/>
<dbReference type="KEGG" id="afw:Anae109_1921"/>
<dbReference type="eggNOG" id="COG0093">
    <property type="taxonomic scope" value="Bacteria"/>
</dbReference>
<dbReference type="HOGENOM" id="CLU_095071_2_1_7"/>
<dbReference type="OrthoDB" id="9806379at2"/>
<dbReference type="Proteomes" id="UP000006382">
    <property type="component" value="Chromosome"/>
</dbReference>
<dbReference type="GO" id="GO:0022625">
    <property type="term" value="C:cytosolic large ribosomal subunit"/>
    <property type="evidence" value="ECO:0007669"/>
    <property type="project" value="TreeGrafter"/>
</dbReference>
<dbReference type="GO" id="GO:0070180">
    <property type="term" value="F:large ribosomal subunit rRNA binding"/>
    <property type="evidence" value="ECO:0007669"/>
    <property type="project" value="TreeGrafter"/>
</dbReference>
<dbReference type="GO" id="GO:0003735">
    <property type="term" value="F:structural constituent of ribosome"/>
    <property type="evidence" value="ECO:0007669"/>
    <property type="project" value="InterPro"/>
</dbReference>
<dbReference type="GO" id="GO:0006412">
    <property type="term" value="P:translation"/>
    <property type="evidence" value="ECO:0007669"/>
    <property type="project" value="UniProtKB-UniRule"/>
</dbReference>
<dbReference type="CDD" id="cd00337">
    <property type="entry name" value="Ribosomal_uL14"/>
    <property type="match status" value="1"/>
</dbReference>
<dbReference type="FunFam" id="2.40.150.20:FF:000001">
    <property type="entry name" value="50S ribosomal protein L14"/>
    <property type="match status" value="1"/>
</dbReference>
<dbReference type="Gene3D" id="2.40.150.20">
    <property type="entry name" value="Ribosomal protein L14"/>
    <property type="match status" value="1"/>
</dbReference>
<dbReference type="HAMAP" id="MF_01367">
    <property type="entry name" value="Ribosomal_uL14"/>
    <property type="match status" value="1"/>
</dbReference>
<dbReference type="InterPro" id="IPR000218">
    <property type="entry name" value="Ribosomal_uL14"/>
</dbReference>
<dbReference type="InterPro" id="IPR005745">
    <property type="entry name" value="Ribosomal_uL14_bac-type"/>
</dbReference>
<dbReference type="InterPro" id="IPR019972">
    <property type="entry name" value="Ribosomal_uL14_CS"/>
</dbReference>
<dbReference type="InterPro" id="IPR036853">
    <property type="entry name" value="Ribosomal_uL14_sf"/>
</dbReference>
<dbReference type="NCBIfam" id="TIGR01067">
    <property type="entry name" value="rplN_bact"/>
    <property type="match status" value="1"/>
</dbReference>
<dbReference type="PANTHER" id="PTHR11761">
    <property type="entry name" value="50S/60S RIBOSOMAL PROTEIN L14/L23"/>
    <property type="match status" value="1"/>
</dbReference>
<dbReference type="PANTHER" id="PTHR11761:SF3">
    <property type="entry name" value="LARGE RIBOSOMAL SUBUNIT PROTEIN UL14M"/>
    <property type="match status" value="1"/>
</dbReference>
<dbReference type="Pfam" id="PF00238">
    <property type="entry name" value="Ribosomal_L14"/>
    <property type="match status" value="1"/>
</dbReference>
<dbReference type="SMART" id="SM01374">
    <property type="entry name" value="Ribosomal_L14"/>
    <property type="match status" value="1"/>
</dbReference>
<dbReference type="SUPFAM" id="SSF50193">
    <property type="entry name" value="Ribosomal protein L14"/>
    <property type="match status" value="1"/>
</dbReference>
<dbReference type="PROSITE" id="PS00049">
    <property type="entry name" value="RIBOSOMAL_L14"/>
    <property type="match status" value="1"/>
</dbReference>
<accession>A7HBM8</accession>
<name>RL14_ANADF</name>
<comment type="function">
    <text evidence="1">Binds to 23S rRNA. Forms part of two intersubunit bridges in the 70S ribosome.</text>
</comment>
<comment type="subunit">
    <text evidence="1">Part of the 50S ribosomal subunit. Forms a cluster with proteins L3 and L19. In the 70S ribosome, L14 and L19 interact and together make contacts with the 16S rRNA in bridges B5 and B8.</text>
</comment>
<comment type="similarity">
    <text evidence="1">Belongs to the universal ribosomal protein uL14 family.</text>
</comment>
<proteinExistence type="inferred from homology"/>
<gene>
    <name evidence="1" type="primary">rplN</name>
    <name type="ordered locus">Anae109_1921</name>
</gene>